<sequence>MAYRRRKKKIKKCRLCEMKLDYVDYKDTRLLSEFLTDKGKIIPKRLTGNCSKHQRMVKVAIKRARQMGLLPYLKI</sequence>
<keyword id="KW-1185">Reference proteome</keyword>
<keyword id="KW-0687">Ribonucleoprotein</keyword>
<keyword id="KW-0689">Ribosomal protein</keyword>
<keyword id="KW-0694">RNA-binding</keyword>
<keyword id="KW-0699">rRNA-binding</keyword>
<organism>
    <name type="scientific">Thermotoga maritima (strain ATCC 43589 / DSM 3109 / JCM 10099 / NBRC 100826 / MSB8)</name>
    <dbReference type="NCBI Taxonomy" id="243274"/>
    <lineage>
        <taxon>Bacteria</taxon>
        <taxon>Thermotogati</taxon>
        <taxon>Thermotogota</taxon>
        <taxon>Thermotogae</taxon>
        <taxon>Thermotogales</taxon>
        <taxon>Thermotogaceae</taxon>
        <taxon>Thermotoga</taxon>
    </lineage>
</organism>
<name>RS18_THEMA</name>
<protein>
    <recommendedName>
        <fullName evidence="1">Small ribosomal subunit protein bS18</fullName>
    </recommendedName>
    <alternativeName>
        <fullName evidence="2">30S ribosomal protein S18</fullName>
    </alternativeName>
</protein>
<reference key="1">
    <citation type="journal article" date="1999" name="Nature">
        <title>Evidence for lateral gene transfer between Archaea and Bacteria from genome sequence of Thermotoga maritima.</title>
        <authorList>
            <person name="Nelson K.E."/>
            <person name="Clayton R.A."/>
            <person name="Gill S.R."/>
            <person name="Gwinn M.L."/>
            <person name="Dodson R.J."/>
            <person name="Haft D.H."/>
            <person name="Hickey E.K."/>
            <person name="Peterson J.D."/>
            <person name="Nelson W.C."/>
            <person name="Ketchum K.A."/>
            <person name="McDonald L.A."/>
            <person name="Utterback T.R."/>
            <person name="Malek J.A."/>
            <person name="Linher K.D."/>
            <person name="Garrett M.M."/>
            <person name="Stewart A.M."/>
            <person name="Cotton M.D."/>
            <person name="Pratt M.S."/>
            <person name="Phillips C.A."/>
            <person name="Richardson D.L."/>
            <person name="Heidelberg J.F."/>
            <person name="Sutton G.G."/>
            <person name="Fleischmann R.D."/>
            <person name="Eisen J.A."/>
            <person name="White O."/>
            <person name="Salzberg S.L."/>
            <person name="Smith H.O."/>
            <person name="Venter J.C."/>
            <person name="Fraser C.M."/>
        </authorList>
    </citation>
    <scope>NUCLEOTIDE SEQUENCE [LARGE SCALE GENOMIC DNA]</scope>
    <source>
        <strain>ATCC 43589 / DSM 3109 / JCM 10099 / NBRC 100826 / MSB8</strain>
    </source>
</reference>
<proteinExistence type="inferred from homology"/>
<gene>
    <name evidence="1" type="primary">rpsR</name>
    <name type="ordered locus">TM_0605</name>
</gene>
<evidence type="ECO:0000255" key="1">
    <source>
        <dbReference type="HAMAP-Rule" id="MF_00270"/>
    </source>
</evidence>
<evidence type="ECO:0000305" key="2"/>
<dbReference type="EMBL" id="AE000512">
    <property type="protein sequence ID" value="AAD35690.1"/>
    <property type="molecule type" value="Genomic_DNA"/>
</dbReference>
<dbReference type="PIR" id="A72355">
    <property type="entry name" value="A72355"/>
</dbReference>
<dbReference type="RefSeq" id="NP_228415.1">
    <property type="nucleotide sequence ID" value="NC_000853.1"/>
</dbReference>
<dbReference type="RefSeq" id="WP_004081224.1">
    <property type="nucleotide sequence ID" value="NC_000853.1"/>
</dbReference>
<dbReference type="SMR" id="Q9WZ74"/>
<dbReference type="FunCoup" id="Q9WZ74">
    <property type="interactions" value="366"/>
</dbReference>
<dbReference type="STRING" id="243274.TM_0605"/>
<dbReference type="PaxDb" id="243274-THEMA_01640"/>
<dbReference type="EnsemblBacteria" id="AAD35690">
    <property type="protein sequence ID" value="AAD35690"/>
    <property type="gene ID" value="TM_0605"/>
</dbReference>
<dbReference type="KEGG" id="tma:TM0605"/>
<dbReference type="KEGG" id="tmi:THEMA_01640"/>
<dbReference type="KEGG" id="tmm:Tmari_0605"/>
<dbReference type="KEGG" id="tmw:THMA_0621"/>
<dbReference type="eggNOG" id="COG0238">
    <property type="taxonomic scope" value="Bacteria"/>
</dbReference>
<dbReference type="InParanoid" id="Q9WZ74"/>
<dbReference type="OrthoDB" id="9812008at2"/>
<dbReference type="Proteomes" id="UP000008183">
    <property type="component" value="Chromosome"/>
</dbReference>
<dbReference type="GO" id="GO:0022627">
    <property type="term" value="C:cytosolic small ribosomal subunit"/>
    <property type="evidence" value="ECO:0000318"/>
    <property type="project" value="GO_Central"/>
</dbReference>
<dbReference type="GO" id="GO:0070181">
    <property type="term" value="F:small ribosomal subunit rRNA binding"/>
    <property type="evidence" value="ECO:0000318"/>
    <property type="project" value="GO_Central"/>
</dbReference>
<dbReference type="GO" id="GO:0003735">
    <property type="term" value="F:structural constituent of ribosome"/>
    <property type="evidence" value="ECO:0000318"/>
    <property type="project" value="GO_Central"/>
</dbReference>
<dbReference type="GO" id="GO:0006412">
    <property type="term" value="P:translation"/>
    <property type="evidence" value="ECO:0000318"/>
    <property type="project" value="GO_Central"/>
</dbReference>
<dbReference type="FunFam" id="4.10.640.10:FF:000025">
    <property type="entry name" value="30S ribosomal protein S18"/>
    <property type="match status" value="1"/>
</dbReference>
<dbReference type="Gene3D" id="4.10.640.10">
    <property type="entry name" value="Ribosomal protein S18"/>
    <property type="match status" value="1"/>
</dbReference>
<dbReference type="HAMAP" id="MF_00270">
    <property type="entry name" value="Ribosomal_bS18"/>
    <property type="match status" value="1"/>
</dbReference>
<dbReference type="InterPro" id="IPR001648">
    <property type="entry name" value="Ribosomal_bS18"/>
</dbReference>
<dbReference type="InterPro" id="IPR018275">
    <property type="entry name" value="Ribosomal_bS18_CS"/>
</dbReference>
<dbReference type="InterPro" id="IPR036870">
    <property type="entry name" value="Ribosomal_bS18_sf"/>
</dbReference>
<dbReference type="NCBIfam" id="TIGR00165">
    <property type="entry name" value="S18"/>
    <property type="match status" value="1"/>
</dbReference>
<dbReference type="PANTHER" id="PTHR13479">
    <property type="entry name" value="30S RIBOSOMAL PROTEIN S18"/>
    <property type="match status" value="1"/>
</dbReference>
<dbReference type="PANTHER" id="PTHR13479:SF40">
    <property type="entry name" value="SMALL RIBOSOMAL SUBUNIT PROTEIN BS18M"/>
    <property type="match status" value="1"/>
</dbReference>
<dbReference type="Pfam" id="PF01084">
    <property type="entry name" value="Ribosomal_S18"/>
    <property type="match status" value="1"/>
</dbReference>
<dbReference type="PRINTS" id="PR00974">
    <property type="entry name" value="RIBOSOMALS18"/>
</dbReference>
<dbReference type="SUPFAM" id="SSF46911">
    <property type="entry name" value="Ribosomal protein S18"/>
    <property type="match status" value="1"/>
</dbReference>
<dbReference type="PROSITE" id="PS00057">
    <property type="entry name" value="RIBOSOMAL_S18"/>
    <property type="match status" value="1"/>
</dbReference>
<feature type="chain" id="PRO_0000111248" description="Small ribosomal subunit protein bS18">
    <location>
        <begin position="1"/>
        <end position="75"/>
    </location>
</feature>
<comment type="function">
    <text evidence="1">Binds as a heterodimer with protein bS6 to the central domain of the 16S rRNA, where it helps stabilize the platform of the 30S subunit.</text>
</comment>
<comment type="subunit">
    <text evidence="1">Part of the 30S ribosomal subunit. Forms a tight heterodimer with protein bS6.</text>
</comment>
<comment type="similarity">
    <text evidence="1">Belongs to the bacterial ribosomal protein bS18 family.</text>
</comment>
<accession>Q9WZ74</accession>